<organism>
    <name type="scientific">Debaryomyces hansenii (strain ATCC 36239 / CBS 767 / BCRC 21394 / JCM 1990 / NBRC 0083 / IGC 2968)</name>
    <name type="common">Yeast</name>
    <name type="synonym">Torulaspora hansenii</name>
    <dbReference type="NCBI Taxonomy" id="284592"/>
    <lineage>
        <taxon>Eukaryota</taxon>
        <taxon>Fungi</taxon>
        <taxon>Dikarya</taxon>
        <taxon>Ascomycota</taxon>
        <taxon>Saccharomycotina</taxon>
        <taxon>Pichiomycetes</taxon>
        <taxon>Debaryomycetaceae</taxon>
        <taxon>Debaryomyces</taxon>
    </lineage>
</organism>
<protein>
    <recommendedName>
        <fullName>Cytochrome b</fullName>
    </recommendedName>
    <alternativeName>
        <fullName>Complex III subunit 3</fullName>
    </alternativeName>
    <alternativeName>
        <fullName>Complex III subunit III</fullName>
    </alternativeName>
    <alternativeName>
        <fullName>Cytochrome b-c1 complex subunit 3</fullName>
    </alternativeName>
    <alternativeName>
        <fullName>Ubiquinol-cytochrome-c reductase complex cytochrome b subunit</fullName>
    </alternativeName>
</protein>
<comment type="function">
    <text evidence="3">Component of the ubiquinol-cytochrome c reductase complex (complex III or cytochrome b-c1 complex) that is part of the mitochondrial respiratory chain. The b-c1 complex mediates electron transfer from ubiquinol to cytochrome c. Contributes to the generation of a proton gradient across the mitochondrial membrane that is then used for ATP synthesis.</text>
</comment>
<comment type="cofactor">
    <cofactor evidence="3">
        <name>heme b</name>
        <dbReference type="ChEBI" id="CHEBI:60344"/>
    </cofactor>
    <text evidence="3">Binds 2 heme b groups non-covalently.</text>
</comment>
<comment type="subunit">
    <text evidence="3">Fungal cytochrome b-c1 complex contains 10 subunits; 3 respiratory subunits, 2 core proteins and 5 low-molecular weight proteins. Cytochrome b-c1 complex is a homodimer.</text>
</comment>
<comment type="subcellular location">
    <subcellularLocation>
        <location evidence="3">Mitochondrion inner membrane</location>
        <topology evidence="3">Multi-pass membrane protein</topology>
    </subcellularLocation>
</comment>
<comment type="miscellaneous">
    <text evidence="1">Heme 1 (or BL or b562) is low-potential and absorbs at about 562 nm, and heme 2 (or BH or b566) is high-potential and absorbs at about 566 nm.</text>
</comment>
<comment type="similarity">
    <text evidence="4 5">Belongs to the cytochrome b family.</text>
</comment>
<comment type="caution">
    <text evidence="3">The protein contains only eight transmembrane helices, not nine as predicted by bioinformatics tools.</text>
</comment>
<proteinExistence type="inferred from homology"/>
<geneLocation type="mitochondrion"/>
<evidence type="ECO:0000250" key="1"/>
<evidence type="ECO:0000250" key="2">
    <source>
        <dbReference type="UniProtKB" id="P00157"/>
    </source>
</evidence>
<evidence type="ECO:0000250" key="3">
    <source>
        <dbReference type="UniProtKB" id="P00163"/>
    </source>
</evidence>
<evidence type="ECO:0000255" key="4">
    <source>
        <dbReference type="PROSITE-ProRule" id="PRU00967"/>
    </source>
</evidence>
<evidence type="ECO:0000255" key="5">
    <source>
        <dbReference type="PROSITE-ProRule" id="PRU00968"/>
    </source>
</evidence>
<sequence>MTIRKSNPYLSLVNSYLMDSPQPSSMNYWWNVGSLLGLCLVMQMASGMFLAMHYSSSMELAFNSVEHMMRDVNAGWLMRYIHANGASFFFMCLYLHMGKALYYGSYKSPRVLVWSMGVMMFMLTMATAFMGYCLVYGQMSHWGATVITNLLSAMPFMGGDLVPFIWGGFSVSNPTMQRFFALHYLLPFILAALVVMHFMALHVHGSSNPMGMSGNMDRLPMHGYFVFKDLMTVFVFILMFSLFVFYSPNTLGHSDNYMPANPMVTPPSIVPEWYLLPFYAMLRSMPDKLGGVMAMFAALLMLLMLPMTDRSVMRGNTFKMLSKLSFYLFLFNFFLLMNMGQLHVEVPFIELGQFATVYYFSYFLMLVPVMSSMENMLFYMGNK</sequence>
<reference key="1">
    <citation type="journal article" date="2008" name="FEMS Yeast Res.">
        <title>Promiscuous DNA in the nuclear genomes of hemiascomycetous yeasts.</title>
        <authorList>
            <person name="Sacerdot C."/>
            <person name="Casaregola S."/>
            <person name="Lafontaine I."/>
            <person name="Tekaia F."/>
            <person name="Dujon B."/>
            <person name="Ozier-Kalogeropoulos O."/>
        </authorList>
    </citation>
    <scope>NUCLEOTIDE SEQUENCE [LARGE SCALE GENOMIC DNA]</scope>
    <source>
        <strain>ATCC 36239 / CBS 767 / BCRC 21394 / JCM 1990 / NBRC 0083 / IGC 2968</strain>
    </source>
</reference>
<feature type="chain" id="PRO_0000355034" description="Cytochrome b">
    <location>
        <begin position="1"/>
        <end position="383"/>
    </location>
</feature>
<feature type="transmembrane region" description="Helical" evidence="3">
    <location>
        <begin position="32"/>
        <end position="52"/>
    </location>
</feature>
<feature type="transmembrane region" description="Helical" evidence="3">
    <location>
        <begin position="76"/>
        <end position="98"/>
    </location>
</feature>
<feature type="transmembrane region" description="Helical" evidence="3">
    <location>
        <begin position="113"/>
        <end position="133"/>
    </location>
</feature>
<feature type="transmembrane region" description="Helical" evidence="3">
    <location>
        <begin position="179"/>
        <end position="199"/>
    </location>
</feature>
<feature type="transmembrane region" description="Helical" evidence="3">
    <location>
        <begin position="225"/>
        <end position="245"/>
    </location>
</feature>
<feature type="transmembrane region" description="Helical" evidence="3">
    <location>
        <begin position="289"/>
        <end position="309"/>
    </location>
</feature>
<feature type="transmembrane region" description="Helical" evidence="3">
    <location>
        <begin position="321"/>
        <end position="341"/>
    </location>
</feature>
<feature type="transmembrane region" description="Helical" evidence="3">
    <location>
        <begin position="348"/>
        <end position="368"/>
    </location>
</feature>
<feature type="binding site" description="axial binding residue" evidence="5">
    <location>
        <position position="82"/>
    </location>
    <ligand>
        <name>heme b</name>
        <dbReference type="ChEBI" id="CHEBI:60344"/>
        <label>b562</label>
    </ligand>
    <ligandPart>
        <name>Fe</name>
        <dbReference type="ChEBI" id="CHEBI:18248"/>
    </ligandPart>
</feature>
<feature type="binding site" description="axial binding residue" evidence="5">
    <location>
        <position position="96"/>
    </location>
    <ligand>
        <name>heme b</name>
        <dbReference type="ChEBI" id="CHEBI:60344"/>
        <label>b566</label>
    </ligand>
    <ligandPart>
        <name>Fe</name>
        <dbReference type="ChEBI" id="CHEBI:18248"/>
    </ligandPart>
</feature>
<feature type="binding site" description="axial binding residue" evidence="5">
    <location>
        <position position="183"/>
    </location>
    <ligand>
        <name>heme b</name>
        <dbReference type="ChEBI" id="CHEBI:60344"/>
        <label>b562</label>
    </ligand>
    <ligandPart>
        <name>Fe</name>
        <dbReference type="ChEBI" id="CHEBI:18248"/>
    </ligandPart>
</feature>
<feature type="binding site" description="axial binding residue" evidence="5">
    <location>
        <position position="197"/>
    </location>
    <ligand>
        <name>heme b</name>
        <dbReference type="ChEBI" id="CHEBI:60344"/>
        <label>b566</label>
    </ligand>
    <ligandPart>
        <name>Fe</name>
        <dbReference type="ChEBI" id="CHEBI:18248"/>
    </ligandPart>
</feature>
<feature type="binding site" evidence="2">
    <location>
        <position position="202"/>
    </location>
    <ligand>
        <name>a ubiquinone</name>
        <dbReference type="ChEBI" id="CHEBI:16389"/>
    </ligand>
</feature>
<name>CYB_DEBHA</name>
<gene>
    <name type="primary">COB</name>
    <name type="synonym">CYTB</name>
</gene>
<keyword id="KW-0249">Electron transport</keyword>
<keyword id="KW-0349">Heme</keyword>
<keyword id="KW-0408">Iron</keyword>
<keyword id="KW-0472">Membrane</keyword>
<keyword id="KW-0479">Metal-binding</keyword>
<keyword id="KW-0496">Mitochondrion</keyword>
<keyword id="KW-0999">Mitochondrion inner membrane</keyword>
<keyword id="KW-1185">Reference proteome</keyword>
<keyword id="KW-0679">Respiratory chain</keyword>
<keyword id="KW-0812">Transmembrane</keyword>
<keyword id="KW-1133">Transmembrane helix</keyword>
<keyword id="KW-0813">Transport</keyword>
<keyword id="KW-0830">Ubiquinone</keyword>
<dbReference type="EMBL" id="DQ508940">
    <property type="protein sequence ID" value="ABF58067.1"/>
    <property type="molecule type" value="Genomic_DNA"/>
</dbReference>
<dbReference type="RefSeq" id="YP_001621418.1">
    <property type="nucleotide sequence ID" value="NC_010166.1"/>
</dbReference>
<dbReference type="SMR" id="A9RAG6"/>
<dbReference type="FunCoup" id="A9RAG6">
    <property type="interactions" value="658"/>
</dbReference>
<dbReference type="STRING" id="284592.A9RAG6"/>
<dbReference type="GeneID" id="5845845"/>
<dbReference type="KEGG" id="dha:cob"/>
<dbReference type="InParanoid" id="A9RAG6"/>
<dbReference type="Proteomes" id="UP000000599">
    <property type="component" value="Mitochondrion"/>
</dbReference>
<dbReference type="GO" id="GO:0005743">
    <property type="term" value="C:mitochondrial inner membrane"/>
    <property type="evidence" value="ECO:0007669"/>
    <property type="project" value="UniProtKB-SubCell"/>
</dbReference>
<dbReference type="GO" id="GO:0045275">
    <property type="term" value="C:respiratory chain complex III"/>
    <property type="evidence" value="ECO:0007669"/>
    <property type="project" value="InterPro"/>
</dbReference>
<dbReference type="GO" id="GO:0046872">
    <property type="term" value="F:metal ion binding"/>
    <property type="evidence" value="ECO:0007669"/>
    <property type="project" value="UniProtKB-KW"/>
</dbReference>
<dbReference type="GO" id="GO:0008121">
    <property type="term" value="F:ubiquinol-cytochrome-c reductase activity"/>
    <property type="evidence" value="ECO:0007669"/>
    <property type="project" value="InterPro"/>
</dbReference>
<dbReference type="GO" id="GO:0006122">
    <property type="term" value="P:mitochondrial electron transport, ubiquinol to cytochrome c"/>
    <property type="evidence" value="ECO:0007669"/>
    <property type="project" value="TreeGrafter"/>
</dbReference>
<dbReference type="CDD" id="cd00290">
    <property type="entry name" value="cytochrome_b_C"/>
    <property type="match status" value="1"/>
</dbReference>
<dbReference type="CDD" id="cd00284">
    <property type="entry name" value="Cytochrome_b_N"/>
    <property type="match status" value="1"/>
</dbReference>
<dbReference type="Gene3D" id="1.20.810.10">
    <property type="entry name" value="Cytochrome Bc1 Complex, Chain C"/>
    <property type="match status" value="1"/>
</dbReference>
<dbReference type="InterPro" id="IPR005798">
    <property type="entry name" value="Cyt_b/b6_C"/>
</dbReference>
<dbReference type="InterPro" id="IPR036150">
    <property type="entry name" value="Cyt_b/b6_C_sf"/>
</dbReference>
<dbReference type="InterPro" id="IPR005797">
    <property type="entry name" value="Cyt_b/b6_N"/>
</dbReference>
<dbReference type="InterPro" id="IPR027387">
    <property type="entry name" value="Cytb/b6-like_sf"/>
</dbReference>
<dbReference type="InterPro" id="IPR030689">
    <property type="entry name" value="Cytochrome_b"/>
</dbReference>
<dbReference type="InterPro" id="IPR048260">
    <property type="entry name" value="Cytochrome_b_C_euk/bac"/>
</dbReference>
<dbReference type="InterPro" id="IPR048259">
    <property type="entry name" value="Cytochrome_b_N_euk/bac"/>
</dbReference>
<dbReference type="InterPro" id="IPR016174">
    <property type="entry name" value="Di-haem_cyt_TM"/>
</dbReference>
<dbReference type="PANTHER" id="PTHR19271">
    <property type="entry name" value="CYTOCHROME B"/>
    <property type="match status" value="1"/>
</dbReference>
<dbReference type="PANTHER" id="PTHR19271:SF16">
    <property type="entry name" value="CYTOCHROME B"/>
    <property type="match status" value="1"/>
</dbReference>
<dbReference type="Pfam" id="PF00032">
    <property type="entry name" value="Cytochrom_B_C"/>
    <property type="match status" value="1"/>
</dbReference>
<dbReference type="Pfam" id="PF00033">
    <property type="entry name" value="Cytochrome_B"/>
    <property type="match status" value="1"/>
</dbReference>
<dbReference type="PIRSF" id="PIRSF038885">
    <property type="entry name" value="COB"/>
    <property type="match status" value="1"/>
</dbReference>
<dbReference type="SUPFAM" id="SSF81648">
    <property type="entry name" value="a domain/subunit of cytochrome bc1 complex (Ubiquinol-cytochrome c reductase)"/>
    <property type="match status" value="1"/>
</dbReference>
<dbReference type="SUPFAM" id="SSF81342">
    <property type="entry name" value="Transmembrane di-heme cytochromes"/>
    <property type="match status" value="1"/>
</dbReference>
<dbReference type="PROSITE" id="PS51003">
    <property type="entry name" value="CYTB_CTER"/>
    <property type="match status" value="1"/>
</dbReference>
<dbReference type="PROSITE" id="PS51002">
    <property type="entry name" value="CYTB_NTER"/>
    <property type="match status" value="1"/>
</dbReference>
<accession>A9RAG6</accession>